<organism>
    <name type="scientific">Streptococcus pyogenes serotype M49 (strain NZ131)</name>
    <dbReference type="NCBI Taxonomy" id="471876"/>
    <lineage>
        <taxon>Bacteria</taxon>
        <taxon>Bacillati</taxon>
        <taxon>Bacillota</taxon>
        <taxon>Bacilli</taxon>
        <taxon>Lactobacillales</taxon>
        <taxon>Streptococcaceae</taxon>
        <taxon>Streptococcus</taxon>
    </lineage>
</organism>
<feature type="chain" id="PRO_1000089011" description="Adenine phosphoribosyltransferase">
    <location>
        <begin position="1"/>
        <end position="172"/>
    </location>
</feature>
<gene>
    <name evidence="1" type="primary">apt</name>
    <name type="ordered locus">Spy49_0736</name>
</gene>
<proteinExistence type="inferred from homology"/>
<protein>
    <recommendedName>
        <fullName evidence="1">Adenine phosphoribosyltransferase</fullName>
        <shortName evidence="1">APRT</shortName>
        <ecNumber evidence="1">2.4.2.7</ecNumber>
    </recommendedName>
</protein>
<reference key="1">
    <citation type="journal article" date="2008" name="J. Bacteriol.">
        <title>Genome sequence of a nephritogenic and highly transformable M49 strain of Streptococcus pyogenes.</title>
        <authorList>
            <person name="McShan W.M."/>
            <person name="Ferretti J.J."/>
            <person name="Karasawa T."/>
            <person name="Suvorov A.N."/>
            <person name="Lin S."/>
            <person name="Qin B."/>
            <person name="Jia H."/>
            <person name="Kenton S."/>
            <person name="Najar F."/>
            <person name="Wu H."/>
            <person name="Scott J."/>
            <person name="Roe B.A."/>
            <person name="Savic D.J."/>
        </authorList>
    </citation>
    <scope>NUCLEOTIDE SEQUENCE [LARGE SCALE GENOMIC DNA]</scope>
    <source>
        <strain>NZ131</strain>
    </source>
</reference>
<comment type="function">
    <text evidence="1">Catalyzes a salvage reaction resulting in the formation of AMP, that is energically less costly than de novo synthesis.</text>
</comment>
<comment type="catalytic activity">
    <reaction evidence="1">
        <text>AMP + diphosphate = 5-phospho-alpha-D-ribose 1-diphosphate + adenine</text>
        <dbReference type="Rhea" id="RHEA:16609"/>
        <dbReference type="ChEBI" id="CHEBI:16708"/>
        <dbReference type="ChEBI" id="CHEBI:33019"/>
        <dbReference type="ChEBI" id="CHEBI:58017"/>
        <dbReference type="ChEBI" id="CHEBI:456215"/>
        <dbReference type="EC" id="2.4.2.7"/>
    </reaction>
</comment>
<comment type="pathway">
    <text evidence="1">Purine metabolism; AMP biosynthesis via salvage pathway; AMP from adenine: step 1/1.</text>
</comment>
<comment type="subunit">
    <text evidence="1">Homodimer.</text>
</comment>
<comment type="subcellular location">
    <subcellularLocation>
        <location evidence="1">Cytoplasm</location>
    </subcellularLocation>
</comment>
<comment type="similarity">
    <text evidence="1">Belongs to the purine/pyrimidine phosphoribosyltransferase family.</text>
</comment>
<name>APT_STRPZ</name>
<sequence>MDLTNYIASIKDYPKAGITFRDISPLMADGKAYSYAIREIAQYACDKDIDMVVGPEARGFIIGCPVAVELGIGFAPVRKPGKLPRDVVSADYEKEYGLDTLTMHADAIKPGQRVLIVDDLLATGGTVKATIEMIEKLGGIVAGCAFLIELEGLNGRHAIRNYDYKVLMQFPG</sequence>
<dbReference type="EC" id="2.4.2.7" evidence="1"/>
<dbReference type="EMBL" id="CP000829">
    <property type="protein sequence ID" value="ACI61051.1"/>
    <property type="molecule type" value="Genomic_DNA"/>
</dbReference>
<dbReference type="SMR" id="B5XL39"/>
<dbReference type="KEGG" id="soz:Spy49_0736"/>
<dbReference type="HOGENOM" id="CLU_063339_3_0_9"/>
<dbReference type="UniPathway" id="UPA00588">
    <property type="reaction ID" value="UER00646"/>
</dbReference>
<dbReference type="Proteomes" id="UP000001039">
    <property type="component" value="Chromosome"/>
</dbReference>
<dbReference type="GO" id="GO:0005737">
    <property type="term" value="C:cytoplasm"/>
    <property type="evidence" value="ECO:0007669"/>
    <property type="project" value="UniProtKB-SubCell"/>
</dbReference>
<dbReference type="GO" id="GO:0002055">
    <property type="term" value="F:adenine binding"/>
    <property type="evidence" value="ECO:0007669"/>
    <property type="project" value="TreeGrafter"/>
</dbReference>
<dbReference type="GO" id="GO:0003999">
    <property type="term" value="F:adenine phosphoribosyltransferase activity"/>
    <property type="evidence" value="ECO:0007669"/>
    <property type="project" value="UniProtKB-UniRule"/>
</dbReference>
<dbReference type="GO" id="GO:0016208">
    <property type="term" value="F:AMP binding"/>
    <property type="evidence" value="ECO:0007669"/>
    <property type="project" value="TreeGrafter"/>
</dbReference>
<dbReference type="GO" id="GO:0006168">
    <property type="term" value="P:adenine salvage"/>
    <property type="evidence" value="ECO:0007669"/>
    <property type="project" value="InterPro"/>
</dbReference>
<dbReference type="GO" id="GO:0044209">
    <property type="term" value="P:AMP salvage"/>
    <property type="evidence" value="ECO:0007669"/>
    <property type="project" value="UniProtKB-UniRule"/>
</dbReference>
<dbReference type="GO" id="GO:0006166">
    <property type="term" value="P:purine ribonucleoside salvage"/>
    <property type="evidence" value="ECO:0007669"/>
    <property type="project" value="UniProtKB-KW"/>
</dbReference>
<dbReference type="CDD" id="cd06223">
    <property type="entry name" value="PRTases_typeI"/>
    <property type="match status" value="1"/>
</dbReference>
<dbReference type="FunFam" id="3.40.50.2020:FF:000004">
    <property type="entry name" value="Adenine phosphoribosyltransferase"/>
    <property type="match status" value="1"/>
</dbReference>
<dbReference type="Gene3D" id="3.40.50.2020">
    <property type="match status" value="1"/>
</dbReference>
<dbReference type="HAMAP" id="MF_00004">
    <property type="entry name" value="Aden_phosphoribosyltr"/>
    <property type="match status" value="1"/>
</dbReference>
<dbReference type="InterPro" id="IPR005764">
    <property type="entry name" value="Ade_phspho_trans"/>
</dbReference>
<dbReference type="InterPro" id="IPR000836">
    <property type="entry name" value="PRibTrfase_dom"/>
</dbReference>
<dbReference type="InterPro" id="IPR029057">
    <property type="entry name" value="PRTase-like"/>
</dbReference>
<dbReference type="InterPro" id="IPR050054">
    <property type="entry name" value="UPRTase/APRTase"/>
</dbReference>
<dbReference type="NCBIfam" id="TIGR01090">
    <property type="entry name" value="apt"/>
    <property type="match status" value="1"/>
</dbReference>
<dbReference type="NCBIfam" id="NF002633">
    <property type="entry name" value="PRK02304.1-2"/>
    <property type="match status" value="1"/>
</dbReference>
<dbReference type="NCBIfam" id="NF002634">
    <property type="entry name" value="PRK02304.1-3"/>
    <property type="match status" value="1"/>
</dbReference>
<dbReference type="NCBIfam" id="NF002636">
    <property type="entry name" value="PRK02304.1-5"/>
    <property type="match status" value="1"/>
</dbReference>
<dbReference type="PANTHER" id="PTHR32315">
    <property type="entry name" value="ADENINE PHOSPHORIBOSYLTRANSFERASE"/>
    <property type="match status" value="1"/>
</dbReference>
<dbReference type="PANTHER" id="PTHR32315:SF3">
    <property type="entry name" value="ADENINE PHOSPHORIBOSYLTRANSFERASE"/>
    <property type="match status" value="1"/>
</dbReference>
<dbReference type="Pfam" id="PF00156">
    <property type="entry name" value="Pribosyltran"/>
    <property type="match status" value="1"/>
</dbReference>
<dbReference type="SUPFAM" id="SSF53271">
    <property type="entry name" value="PRTase-like"/>
    <property type="match status" value="1"/>
</dbReference>
<dbReference type="PROSITE" id="PS00103">
    <property type="entry name" value="PUR_PYR_PR_TRANSFER"/>
    <property type="match status" value="1"/>
</dbReference>
<keyword id="KW-0963">Cytoplasm</keyword>
<keyword id="KW-0328">Glycosyltransferase</keyword>
<keyword id="KW-0660">Purine salvage</keyword>
<keyword id="KW-0808">Transferase</keyword>
<evidence type="ECO:0000255" key="1">
    <source>
        <dbReference type="HAMAP-Rule" id="MF_00004"/>
    </source>
</evidence>
<accession>B5XL39</accession>